<accession>Q8SRD2</accession>
<reference key="1">
    <citation type="journal article" date="2001" name="Nature">
        <title>Genome sequence and gene compaction of the eukaryote parasite Encephalitozoon cuniculi.</title>
        <authorList>
            <person name="Katinka M.D."/>
            <person name="Duprat S."/>
            <person name="Cornillot E."/>
            <person name="Metenier G."/>
            <person name="Thomarat F."/>
            <person name="Prensier G."/>
            <person name="Barbe V."/>
            <person name="Peyretaillade E."/>
            <person name="Brottier P."/>
            <person name="Wincker P."/>
            <person name="Delbac F."/>
            <person name="El Alaoui H."/>
            <person name="Peyret P."/>
            <person name="Saurin W."/>
            <person name="Gouy M."/>
            <person name="Weissenbach J."/>
            <person name="Vivares C.P."/>
        </authorList>
    </citation>
    <scope>NUCLEOTIDE SEQUENCE [LARGE SCALE GENOMIC DNA]</scope>
    <source>
        <strain>GB-M1</strain>
    </source>
</reference>
<sequence>MREVVTLQVGQCGNQMGAEFWKTLCKEHGISMCGVLQDSRDLGDRKDVFFYQADDNVFVPRAILVDLEPRVISQAPSFFSQESIFLSNEGGGAGNNWGHGYCVGKAMGNDVIDMIQREAEGCDALETFLLLHSIAGGTGSGFGSLLLERIKEEFPKKIVQTYSIFPNNDESSDVVVQPYNSVLTLHRLIENSDCIVVMDNSSLGRYTLDSLRIGTPTFDHINLLISTVMAASTSTIRFPGYMYCTHQSINNCLVPLDPLKFVVPSYTPFVCDEMSRVVRKATCSDVMRRLLLPKTRLAGYEQTKAQSVVSMLNILHGVEDSGEVSRTVMRFLDKGMVNFVPWMPPSFNVALGKCIANETRPSRVSGLSLTNSTGASLILSKISGQFDKLRKQRAFLDIYKRFGVEPEMFDEGKEIVQKALEEYHSAEMAAYPNH</sequence>
<comment type="function">
    <text evidence="1">Tubulin is the major constituent of microtubules. The gamma chain is found at microtubule organizing centers (MTOC) such as the spindle poles or the centrosome, suggesting that it is involved in the minus-end nucleation of microtubule assembly (By similarity).</text>
</comment>
<comment type="subcellular location">
    <subcellularLocation>
        <location evidence="3">Cytoplasm</location>
        <location evidence="3">Cytoskeleton</location>
        <location evidence="3">Microtubule organizing center</location>
        <location evidence="3">Spindle pole body</location>
    </subcellularLocation>
</comment>
<comment type="similarity">
    <text evidence="3">Belongs to the tubulin family.</text>
</comment>
<keyword id="KW-0963">Cytoplasm</keyword>
<keyword id="KW-0206">Cytoskeleton</keyword>
<keyword id="KW-0342">GTP-binding</keyword>
<keyword id="KW-0493">Microtubule</keyword>
<keyword id="KW-0547">Nucleotide-binding</keyword>
<keyword id="KW-1185">Reference proteome</keyword>
<dbReference type="EMBL" id="AL590448">
    <property type="protein sequence ID" value="CAD26372.1"/>
    <property type="molecule type" value="Genomic_DNA"/>
</dbReference>
<dbReference type="RefSeq" id="NP_597196.1">
    <property type="nucleotide sequence ID" value="NM_001041805.1"/>
</dbReference>
<dbReference type="SMR" id="Q8SRD2"/>
<dbReference type="FunCoup" id="Q8SRD2">
    <property type="interactions" value="148"/>
</dbReference>
<dbReference type="STRING" id="284813.Q8SRD2"/>
<dbReference type="GeneID" id="859618"/>
<dbReference type="KEGG" id="ecu:ECU08_0670"/>
<dbReference type="VEuPathDB" id="MicrosporidiaDB:ECU08_0670"/>
<dbReference type="HOGENOM" id="CLU_015718_1_0_1"/>
<dbReference type="InParanoid" id="Q8SRD2"/>
<dbReference type="OMA" id="QTYSIFP"/>
<dbReference type="OrthoDB" id="10249382at2759"/>
<dbReference type="Proteomes" id="UP000000819">
    <property type="component" value="Chromosome VIII"/>
</dbReference>
<dbReference type="GO" id="GO:0005737">
    <property type="term" value="C:cytoplasm"/>
    <property type="evidence" value="ECO:0007669"/>
    <property type="project" value="UniProtKB-KW"/>
</dbReference>
<dbReference type="GO" id="GO:0000930">
    <property type="term" value="C:gamma-tubulin complex"/>
    <property type="evidence" value="ECO:0007669"/>
    <property type="project" value="InterPro"/>
</dbReference>
<dbReference type="GO" id="GO:0005874">
    <property type="term" value="C:microtubule"/>
    <property type="evidence" value="ECO:0007669"/>
    <property type="project" value="UniProtKB-KW"/>
</dbReference>
<dbReference type="GO" id="GO:0005816">
    <property type="term" value="C:spindle pole body"/>
    <property type="evidence" value="ECO:0007669"/>
    <property type="project" value="UniProtKB-SubCell"/>
</dbReference>
<dbReference type="GO" id="GO:0005525">
    <property type="term" value="F:GTP binding"/>
    <property type="evidence" value="ECO:0007669"/>
    <property type="project" value="UniProtKB-KW"/>
</dbReference>
<dbReference type="GO" id="GO:0031122">
    <property type="term" value="P:cytoplasmic microtubule organization"/>
    <property type="evidence" value="ECO:0007669"/>
    <property type="project" value="InterPro"/>
</dbReference>
<dbReference type="GO" id="GO:0007020">
    <property type="term" value="P:microtubule nucleation"/>
    <property type="evidence" value="ECO:0007669"/>
    <property type="project" value="InterPro"/>
</dbReference>
<dbReference type="CDD" id="cd02188">
    <property type="entry name" value="gamma_tubulin"/>
    <property type="match status" value="1"/>
</dbReference>
<dbReference type="Gene3D" id="1.10.287.600">
    <property type="entry name" value="Helix hairpin bin"/>
    <property type="match status" value="1"/>
</dbReference>
<dbReference type="Gene3D" id="3.30.1330.20">
    <property type="entry name" value="Tubulin/FtsZ, C-terminal domain"/>
    <property type="match status" value="1"/>
</dbReference>
<dbReference type="Gene3D" id="3.40.50.1440">
    <property type="entry name" value="Tubulin/FtsZ, GTPase domain"/>
    <property type="match status" value="1"/>
</dbReference>
<dbReference type="InterPro" id="IPR002454">
    <property type="entry name" value="Gamma_tubulin"/>
</dbReference>
<dbReference type="InterPro" id="IPR008280">
    <property type="entry name" value="Tub_FtsZ_C"/>
</dbReference>
<dbReference type="InterPro" id="IPR000217">
    <property type="entry name" value="Tubulin"/>
</dbReference>
<dbReference type="InterPro" id="IPR037103">
    <property type="entry name" value="Tubulin/FtsZ-like_C"/>
</dbReference>
<dbReference type="InterPro" id="IPR018316">
    <property type="entry name" value="Tubulin/FtsZ_2-layer-sand-dom"/>
</dbReference>
<dbReference type="InterPro" id="IPR036525">
    <property type="entry name" value="Tubulin/FtsZ_GTPase_sf"/>
</dbReference>
<dbReference type="InterPro" id="IPR023123">
    <property type="entry name" value="Tubulin_C"/>
</dbReference>
<dbReference type="InterPro" id="IPR017975">
    <property type="entry name" value="Tubulin_CS"/>
</dbReference>
<dbReference type="InterPro" id="IPR003008">
    <property type="entry name" value="Tubulin_FtsZ_GTPase"/>
</dbReference>
<dbReference type="PANTHER" id="PTHR11588">
    <property type="entry name" value="TUBULIN"/>
    <property type="match status" value="1"/>
</dbReference>
<dbReference type="Pfam" id="PF00091">
    <property type="entry name" value="Tubulin"/>
    <property type="match status" value="1"/>
</dbReference>
<dbReference type="Pfam" id="PF03953">
    <property type="entry name" value="Tubulin_C"/>
    <property type="match status" value="1"/>
</dbReference>
<dbReference type="PRINTS" id="PR01164">
    <property type="entry name" value="GAMMATUBULIN"/>
</dbReference>
<dbReference type="PRINTS" id="PR01161">
    <property type="entry name" value="TUBULIN"/>
</dbReference>
<dbReference type="SMART" id="SM00864">
    <property type="entry name" value="Tubulin"/>
    <property type="match status" value="1"/>
</dbReference>
<dbReference type="SUPFAM" id="SSF55307">
    <property type="entry name" value="Tubulin C-terminal domain-like"/>
    <property type="match status" value="1"/>
</dbReference>
<dbReference type="SUPFAM" id="SSF52490">
    <property type="entry name" value="Tubulin nucleotide-binding domain-like"/>
    <property type="match status" value="1"/>
</dbReference>
<dbReference type="PROSITE" id="PS00227">
    <property type="entry name" value="TUBULIN"/>
    <property type="match status" value="1"/>
</dbReference>
<proteinExistence type="inferred from homology"/>
<name>TBG_ENCCU</name>
<protein>
    <recommendedName>
        <fullName>Tubulin gamma chain</fullName>
    </recommendedName>
    <alternativeName>
        <fullName>Gamma-tubulin</fullName>
    </alternativeName>
</protein>
<organism>
    <name type="scientific">Encephalitozoon cuniculi (strain GB-M1)</name>
    <name type="common">Microsporidian parasite</name>
    <dbReference type="NCBI Taxonomy" id="284813"/>
    <lineage>
        <taxon>Eukaryota</taxon>
        <taxon>Fungi</taxon>
        <taxon>Fungi incertae sedis</taxon>
        <taxon>Microsporidia</taxon>
        <taxon>Unikaryonidae</taxon>
        <taxon>Encephalitozoon</taxon>
    </lineage>
</organism>
<gene>
    <name type="primary">TUB4</name>
    <name type="ordered locus">ECU08_0670</name>
</gene>
<evidence type="ECO:0000250" key="1"/>
<evidence type="ECO:0000255" key="2"/>
<evidence type="ECO:0000305" key="3"/>
<feature type="chain" id="PRO_0000048457" description="Tubulin gamma chain">
    <location>
        <begin position="1"/>
        <end position="434"/>
    </location>
</feature>
<feature type="binding site" evidence="2">
    <location>
        <begin position="135"/>
        <end position="141"/>
    </location>
    <ligand>
        <name>GTP</name>
        <dbReference type="ChEBI" id="CHEBI:37565"/>
    </ligand>
</feature>